<organism>
    <name type="scientific">Thermococcus kodakarensis (strain ATCC BAA-918 / JCM 12380 / KOD1)</name>
    <name type="common">Pyrococcus kodakaraensis (strain KOD1)</name>
    <dbReference type="NCBI Taxonomy" id="69014"/>
    <lineage>
        <taxon>Archaea</taxon>
        <taxon>Methanobacteriati</taxon>
        <taxon>Methanobacteriota</taxon>
        <taxon>Thermococci</taxon>
        <taxon>Thermococcales</taxon>
        <taxon>Thermococcaceae</taxon>
        <taxon>Thermococcus</taxon>
    </lineage>
</organism>
<accession>Q5JJ91</accession>
<sequence length="409" mass="45471">MHELVLSGRFVLNGEIVGGSIGIDNGLITEISRRDIKGEEVIAFKSEIILPGLIDTHVHLRDFEQKEKETVESGTKAALHGGITAVFDMPNTKPPIMDVKTFEKRLSILEKHAYSDYAASFLLAGNCGEASRARADFYKIFMGASTGGIFSENFESDYSCAPGIVSVHAEDPETIRENPERPPEAEIRAIKKALTAAEKLRKPLNVCHVSTVGGIEAIIKKNLPWVSFEVTPHHLFLTSKDFERNPLLKVYPPLRSEEHRKALWENFSRIPIIASDHAPHTIEDKEAGAAGIPGLETEVALLLDAANRGLITVFDIVEKMHDNPVRFFGIKGRDFSLGNEATFTIIDPKKEWKVKPEEFYTKAKWSPWEGKKLKGKVVMTVIRGMVVMEGDEIIEEPKGVRLDVQGGNH</sequence>
<proteinExistence type="inferred from homology"/>
<gene>
    <name evidence="1" type="primary">pyrC</name>
    <name type="ordered locus">TK1805</name>
</gene>
<protein>
    <recommendedName>
        <fullName evidence="1">Dihydroorotase</fullName>
        <shortName evidence="1">DHOase</shortName>
        <ecNumber evidence="1">3.5.2.3</ecNumber>
    </recommendedName>
</protein>
<reference key="1">
    <citation type="journal article" date="2005" name="Genome Res.">
        <title>Complete genome sequence of the hyperthermophilic archaeon Thermococcus kodakaraensis KOD1 and comparison with Pyrococcus genomes.</title>
        <authorList>
            <person name="Fukui T."/>
            <person name="Atomi H."/>
            <person name="Kanai T."/>
            <person name="Matsumi R."/>
            <person name="Fujiwara S."/>
            <person name="Imanaka T."/>
        </authorList>
    </citation>
    <scope>NUCLEOTIDE SEQUENCE [LARGE SCALE GENOMIC DNA]</scope>
    <source>
        <strain>ATCC BAA-918 / JCM 12380 / KOD1</strain>
    </source>
</reference>
<name>PYRC_THEKO</name>
<dbReference type="EC" id="3.5.2.3" evidence="1"/>
<dbReference type="EMBL" id="AP006878">
    <property type="protein sequence ID" value="BAD85994.1"/>
    <property type="molecule type" value="Genomic_DNA"/>
</dbReference>
<dbReference type="RefSeq" id="WP_011250756.1">
    <property type="nucleotide sequence ID" value="NC_006624.1"/>
</dbReference>
<dbReference type="SMR" id="Q5JJ91"/>
<dbReference type="FunCoup" id="Q5JJ91">
    <property type="interactions" value="65"/>
</dbReference>
<dbReference type="STRING" id="69014.TK1805"/>
<dbReference type="EnsemblBacteria" id="BAD85994">
    <property type="protein sequence ID" value="BAD85994"/>
    <property type="gene ID" value="TK1805"/>
</dbReference>
<dbReference type="GeneID" id="78448336"/>
<dbReference type="KEGG" id="tko:TK1805"/>
<dbReference type="PATRIC" id="fig|69014.16.peg.1761"/>
<dbReference type="eggNOG" id="arCOG00689">
    <property type="taxonomic scope" value="Archaea"/>
</dbReference>
<dbReference type="HOGENOM" id="CLU_015572_1_1_2"/>
<dbReference type="InParanoid" id="Q5JJ91"/>
<dbReference type="OrthoDB" id="50279at2157"/>
<dbReference type="PhylomeDB" id="Q5JJ91"/>
<dbReference type="UniPathway" id="UPA00070">
    <property type="reaction ID" value="UER00117"/>
</dbReference>
<dbReference type="Proteomes" id="UP000000536">
    <property type="component" value="Chromosome"/>
</dbReference>
<dbReference type="GO" id="GO:0005737">
    <property type="term" value="C:cytoplasm"/>
    <property type="evidence" value="ECO:0000318"/>
    <property type="project" value="GO_Central"/>
</dbReference>
<dbReference type="GO" id="GO:0004038">
    <property type="term" value="F:allantoinase activity"/>
    <property type="evidence" value="ECO:0000318"/>
    <property type="project" value="GO_Central"/>
</dbReference>
<dbReference type="GO" id="GO:0004151">
    <property type="term" value="F:dihydroorotase activity"/>
    <property type="evidence" value="ECO:0007669"/>
    <property type="project" value="UniProtKB-UniRule"/>
</dbReference>
<dbReference type="GO" id="GO:0008270">
    <property type="term" value="F:zinc ion binding"/>
    <property type="evidence" value="ECO:0007669"/>
    <property type="project" value="UniProtKB-UniRule"/>
</dbReference>
<dbReference type="GO" id="GO:0044205">
    <property type="term" value="P:'de novo' UMP biosynthetic process"/>
    <property type="evidence" value="ECO:0007669"/>
    <property type="project" value="UniProtKB-UniRule"/>
</dbReference>
<dbReference type="GO" id="GO:0006145">
    <property type="term" value="P:purine nucleobase catabolic process"/>
    <property type="evidence" value="ECO:0000318"/>
    <property type="project" value="GO_Central"/>
</dbReference>
<dbReference type="CDD" id="cd01318">
    <property type="entry name" value="DHOase_IIb"/>
    <property type="match status" value="1"/>
</dbReference>
<dbReference type="Gene3D" id="3.20.20.140">
    <property type="entry name" value="Metal-dependent hydrolases"/>
    <property type="match status" value="1"/>
</dbReference>
<dbReference type="HAMAP" id="MF_00220_A">
    <property type="entry name" value="PyrC_classI_A"/>
    <property type="match status" value="1"/>
</dbReference>
<dbReference type="InterPro" id="IPR006680">
    <property type="entry name" value="Amidohydro-rel"/>
</dbReference>
<dbReference type="InterPro" id="IPR004722">
    <property type="entry name" value="DHOase"/>
</dbReference>
<dbReference type="InterPro" id="IPR050138">
    <property type="entry name" value="DHOase/Allantoinase_Hydrolase"/>
</dbReference>
<dbReference type="InterPro" id="IPR002195">
    <property type="entry name" value="Dihydroorotase_CS"/>
</dbReference>
<dbReference type="InterPro" id="IPR011059">
    <property type="entry name" value="Metal-dep_hydrolase_composite"/>
</dbReference>
<dbReference type="InterPro" id="IPR032466">
    <property type="entry name" value="Metal_Hydrolase"/>
</dbReference>
<dbReference type="NCBIfam" id="NF003271">
    <property type="entry name" value="PRK04250.1"/>
    <property type="match status" value="1"/>
</dbReference>
<dbReference type="NCBIfam" id="TIGR00857">
    <property type="entry name" value="pyrC_multi"/>
    <property type="match status" value="1"/>
</dbReference>
<dbReference type="PANTHER" id="PTHR43668">
    <property type="entry name" value="ALLANTOINASE"/>
    <property type="match status" value="1"/>
</dbReference>
<dbReference type="PANTHER" id="PTHR43668:SF2">
    <property type="entry name" value="ALLANTOINASE"/>
    <property type="match status" value="1"/>
</dbReference>
<dbReference type="Pfam" id="PF01979">
    <property type="entry name" value="Amidohydro_1"/>
    <property type="match status" value="1"/>
</dbReference>
<dbReference type="SUPFAM" id="SSF51338">
    <property type="entry name" value="Composite domain of metallo-dependent hydrolases"/>
    <property type="match status" value="1"/>
</dbReference>
<dbReference type="SUPFAM" id="SSF51556">
    <property type="entry name" value="Metallo-dependent hydrolases"/>
    <property type="match status" value="1"/>
</dbReference>
<dbReference type="PROSITE" id="PS00483">
    <property type="entry name" value="DIHYDROOROTASE_2"/>
    <property type="match status" value="1"/>
</dbReference>
<comment type="function">
    <text evidence="1">Catalyzes the reversible cyclization of carbamoyl aspartate to dihydroorotate.</text>
</comment>
<comment type="catalytic activity">
    <reaction evidence="1">
        <text>(S)-dihydroorotate + H2O = N-carbamoyl-L-aspartate + H(+)</text>
        <dbReference type="Rhea" id="RHEA:24296"/>
        <dbReference type="ChEBI" id="CHEBI:15377"/>
        <dbReference type="ChEBI" id="CHEBI:15378"/>
        <dbReference type="ChEBI" id="CHEBI:30864"/>
        <dbReference type="ChEBI" id="CHEBI:32814"/>
        <dbReference type="EC" id="3.5.2.3"/>
    </reaction>
</comment>
<comment type="cofactor">
    <cofactor evidence="1">
        <name>Zn(2+)</name>
        <dbReference type="ChEBI" id="CHEBI:29105"/>
    </cofactor>
    <text evidence="1">Binds 2 Zn(2+) ions per subunit.</text>
</comment>
<comment type="pathway">
    <text evidence="1">Pyrimidine metabolism; UMP biosynthesis via de novo pathway; (S)-dihydroorotate from bicarbonate: step 3/3.</text>
</comment>
<comment type="similarity">
    <text evidence="1">Belongs to the metallo-dependent hydrolases superfamily. DHOase family. Class I DHOase subfamily.</text>
</comment>
<keyword id="KW-0378">Hydrolase</keyword>
<keyword id="KW-0479">Metal-binding</keyword>
<keyword id="KW-0665">Pyrimidine biosynthesis</keyword>
<keyword id="KW-1185">Reference proteome</keyword>
<keyword id="KW-0862">Zinc</keyword>
<feature type="chain" id="PRO_0000147278" description="Dihydroorotase">
    <location>
        <begin position="1"/>
        <end position="409"/>
    </location>
</feature>
<feature type="active site" evidence="1">
    <location>
        <position position="276"/>
    </location>
</feature>
<feature type="binding site" evidence="1">
    <location>
        <position position="57"/>
    </location>
    <ligand>
        <name>Zn(2+)</name>
        <dbReference type="ChEBI" id="CHEBI:29105"/>
        <label>1</label>
    </ligand>
</feature>
<feature type="binding site" evidence="1">
    <location>
        <begin position="59"/>
        <end position="61"/>
    </location>
    <ligand>
        <name>substrate</name>
    </ligand>
</feature>
<feature type="binding site" evidence="1">
    <location>
        <position position="59"/>
    </location>
    <ligand>
        <name>Zn(2+)</name>
        <dbReference type="ChEBI" id="CHEBI:29105"/>
        <label>1</label>
    </ligand>
</feature>
<feature type="binding site" evidence="1">
    <location>
        <position position="91"/>
    </location>
    <ligand>
        <name>substrate</name>
    </ligand>
</feature>
<feature type="binding site" evidence="1">
    <location>
        <position position="139"/>
    </location>
    <ligand>
        <name>Zn(2+)</name>
        <dbReference type="ChEBI" id="CHEBI:29105"/>
        <label>1</label>
    </ligand>
</feature>
<feature type="binding site" evidence="1">
    <location>
        <position position="139"/>
    </location>
    <ligand>
        <name>Zn(2+)</name>
        <dbReference type="ChEBI" id="CHEBI:29105"/>
        <label>2</label>
    </ligand>
</feature>
<feature type="binding site" evidence="1">
    <location>
        <position position="168"/>
    </location>
    <ligand>
        <name>Zn(2+)</name>
        <dbReference type="ChEBI" id="CHEBI:29105"/>
        <label>2</label>
    </ligand>
</feature>
<feature type="binding site" evidence="1">
    <location>
        <position position="208"/>
    </location>
    <ligand>
        <name>Zn(2+)</name>
        <dbReference type="ChEBI" id="CHEBI:29105"/>
        <label>2</label>
    </ligand>
</feature>
<feature type="binding site" evidence="1">
    <location>
        <position position="276"/>
    </location>
    <ligand>
        <name>Zn(2+)</name>
        <dbReference type="ChEBI" id="CHEBI:29105"/>
        <label>1</label>
    </ligand>
</feature>
<feature type="binding site" evidence="1">
    <location>
        <position position="280"/>
    </location>
    <ligand>
        <name>substrate</name>
    </ligand>
</feature>
<feature type="binding site" evidence="1">
    <location>
        <begin position="290"/>
        <end position="291"/>
    </location>
    <ligand>
        <name>substrate</name>
    </ligand>
</feature>
<feature type="modified residue" description="N6-carboxylysine" evidence="1">
    <location>
        <position position="139"/>
    </location>
</feature>
<evidence type="ECO:0000255" key="1">
    <source>
        <dbReference type="HAMAP-Rule" id="MF_00220"/>
    </source>
</evidence>